<keyword id="KW-0002">3D-structure</keyword>
<keyword id="KW-0025">Alternative splicing</keyword>
<keyword id="KW-0963">Cytoplasm</keyword>
<keyword id="KW-0225">Disease variant</keyword>
<keyword id="KW-0378">Hydrolase</keyword>
<keyword id="KW-0991">Intellectual disability</keyword>
<keyword id="KW-1017">Isopeptide bond</keyword>
<keyword id="KW-0539">Nucleus</keyword>
<keyword id="KW-0550">Obesity</keyword>
<keyword id="KW-0597">Phosphoprotein</keyword>
<keyword id="KW-1267">Proteomics identification</keyword>
<keyword id="KW-1185">Reference proteome</keyword>
<keyword id="KW-0698">rRNA processing</keyword>
<keyword id="KW-0832">Ubl conjugation</keyword>
<reference key="1">
    <citation type="submission" date="1998-12" db="EMBL/GenBank/DDBJ databases">
        <authorList>
            <person name="Zhao B."/>
            <person name="Xu Y.Y."/>
            <person name="Liu Y.Q."/>
            <person name="Wang X.Y."/>
            <person name="Liu B."/>
            <person name="Ye J."/>
            <person name="Song L."/>
            <person name="Zhao Y."/>
            <person name="Cao H.Q."/>
            <person name="Zhao X.W."/>
            <person name="Gao Y."/>
            <person name="Liu L.S."/>
            <person name="Ding J.F."/>
            <person name="Gao R.L."/>
            <person name="Wu Q.Y."/>
            <person name="Qiang B.Q."/>
            <person name="Yuan J.G."/>
            <person name="Liew C.C."/>
            <person name="Zhao M.S."/>
            <person name="Hui R.T."/>
        </authorList>
    </citation>
    <scope>NUCLEOTIDE SEQUENCE [LARGE SCALE MRNA] (ISOFORM 1)</scope>
    <source>
        <tissue>Aorta</tissue>
    </source>
</reference>
<reference key="2">
    <citation type="submission" date="2002-01" db="EMBL/GenBank/DDBJ databases">
        <title>The nucleotide sequence of a long cDNA clone isolated from human spleen.</title>
        <authorList>
            <person name="Jikuya H."/>
            <person name="Takano J."/>
            <person name="Nomura N."/>
            <person name="Kikuno R."/>
            <person name="Nagase T."/>
            <person name="Ohara O."/>
        </authorList>
    </citation>
    <scope>NUCLEOTIDE SEQUENCE [LARGE SCALE MRNA] (ISOFORM 4)</scope>
    <source>
        <tissue>Spleen</tissue>
    </source>
</reference>
<reference key="3">
    <citation type="journal article" date="2004" name="Nat. Genet.">
        <title>Complete sequencing and characterization of 21,243 full-length human cDNAs.</title>
        <authorList>
            <person name="Ota T."/>
            <person name="Suzuki Y."/>
            <person name="Nishikawa T."/>
            <person name="Otsuki T."/>
            <person name="Sugiyama T."/>
            <person name="Irie R."/>
            <person name="Wakamatsu A."/>
            <person name="Hayashi K."/>
            <person name="Sato H."/>
            <person name="Nagai K."/>
            <person name="Kimura K."/>
            <person name="Makita H."/>
            <person name="Sekine M."/>
            <person name="Obayashi M."/>
            <person name="Nishi T."/>
            <person name="Shibahara T."/>
            <person name="Tanaka T."/>
            <person name="Ishii S."/>
            <person name="Yamamoto J."/>
            <person name="Saito K."/>
            <person name="Kawai Y."/>
            <person name="Isono Y."/>
            <person name="Nakamura Y."/>
            <person name="Nagahari K."/>
            <person name="Murakami K."/>
            <person name="Yasuda T."/>
            <person name="Iwayanagi T."/>
            <person name="Wagatsuma M."/>
            <person name="Shiratori A."/>
            <person name="Sudo H."/>
            <person name="Hosoiri T."/>
            <person name="Kaku Y."/>
            <person name="Kodaira H."/>
            <person name="Kondo H."/>
            <person name="Sugawara M."/>
            <person name="Takahashi M."/>
            <person name="Kanda K."/>
            <person name="Yokoi T."/>
            <person name="Furuya T."/>
            <person name="Kikkawa E."/>
            <person name="Omura Y."/>
            <person name="Abe K."/>
            <person name="Kamihara K."/>
            <person name="Katsuta N."/>
            <person name="Sato K."/>
            <person name="Tanikawa M."/>
            <person name="Yamazaki M."/>
            <person name="Ninomiya K."/>
            <person name="Ishibashi T."/>
            <person name="Yamashita H."/>
            <person name="Murakawa K."/>
            <person name="Fujimori K."/>
            <person name="Tanai H."/>
            <person name="Kimata M."/>
            <person name="Watanabe M."/>
            <person name="Hiraoka S."/>
            <person name="Chiba Y."/>
            <person name="Ishida S."/>
            <person name="Ono Y."/>
            <person name="Takiguchi S."/>
            <person name="Watanabe S."/>
            <person name="Yosida M."/>
            <person name="Hotuta T."/>
            <person name="Kusano J."/>
            <person name="Kanehori K."/>
            <person name="Takahashi-Fujii A."/>
            <person name="Hara H."/>
            <person name="Tanase T.-O."/>
            <person name="Nomura Y."/>
            <person name="Togiya S."/>
            <person name="Komai F."/>
            <person name="Hara R."/>
            <person name="Takeuchi K."/>
            <person name="Arita M."/>
            <person name="Imose N."/>
            <person name="Musashino K."/>
            <person name="Yuuki H."/>
            <person name="Oshima A."/>
            <person name="Sasaki N."/>
            <person name="Aotsuka S."/>
            <person name="Yoshikawa Y."/>
            <person name="Matsunawa H."/>
            <person name="Ichihara T."/>
            <person name="Shiohata N."/>
            <person name="Sano S."/>
            <person name="Moriya S."/>
            <person name="Momiyama H."/>
            <person name="Satoh N."/>
            <person name="Takami S."/>
            <person name="Terashima Y."/>
            <person name="Suzuki O."/>
            <person name="Nakagawa S."/>
            <person name="Senoh A."/>
            <person name="Mizoguchi H."/>
            <person name="Goto Y."/>
            <person name="Shimizu F."/>
            <person name="Wakebe H."/>
            <person name="Hishigaki H."/>
            <person name="Watanabe T."/>
            <person name="Sugiyama A."/>
            <person name="Takemoto M."/>
            <person name="Kawakami B."/>
            <person name="Yamazaki M."/>
            <person name="Watanabe K."/>
            <person name="Kumagai A."/>
            <person name="Itakura S."/>
            <person name="Fukuzumi Y."/>
            <person name="Fujimori Y."/>
            <person name="Komiyama M."/>
            <person name="Tashiro H."/>
            <person name="Tanigami A."/>
            <person name="Fujiwara T."/>
            <person name="Ono T."/>
            <person name="Yamada K."/>
            <person name="Fujii Y."/>
            <person name="Ozaki K."/>
            <person name="Hirao M."/>
            <person name="Ohmori Y."/>
            <person name="Kawabata A."/>
            <person name="Hikiji T."/>
            <person name="Kobatake N."/>
            <person name="Inagaki H."/>
            <person name="Ikema Y."/>
            <person name="Okamoto S."/>
            <person name="Okitani R."/>
            <person name="Kawakami T."/>
            <person name="Noguchi S."/>
            <person name="Itoh T."/>
            <person name="Shigeta K."/>
            <person name="Senba T."/>
            <person name="Matsumura K."/>
            <person name="Nakajima Y."/>
            <person name="Mizuno T."/>
            <person name="Morinaga M."/>
            <person name="Sasaki M."/>
            <person name="Togashi T."/>
            <person name="Oyama M."/>
            <person name="Hata H."/>
            <person name="Watanabe M."/>
            <person name="Komatsu T."/>
            <person name="Mizushima-Sugano J."/>
            <person name="Satoh T."/>
            <person name="Shirai Y."/>
            <person name="Takahashi Y."/>
            <person name="Nakagawa K."/>
            <person name="Okumura K."/>
            <person name="Nagase T."/>
            <person name="Nomura N."/>
            <person name="Kikuchi H."/>
            <person name="Masuho Y."/>
            <person name="Yamashita R."/>
            <person name="Nakai K."/>
            <person name="Yada T."/>
            <person name="Nakamura Y."/>
            <person name="Ohara O."/>
            <person name="Isogai T."/>
            <person name="Sugano S."/>
        </authorList>
    </citation>
    <scope>NUCLEOTIDE SEQUENCE [LARGE SCALE MRNA] (ISOFORM 1)</scope>
    <source>
        <tissue>Teratocarcinoma</tissue>
    </source>
</reference>
<reference key="4">
    <citation type="journal article" date="2005" name="Nature">
        <title>The DNA sequence of the human X chromosome.</title>
        <authorList>
            <person name="Ross M.T."/>
            <person name="Grafham D.V."/>
            <person name="Coffey A.J."/>
            <person name="Scherer S."/>
            <person name="McLay K."/>
            <person name="Muzny D."/>
            <person name="Platzer M."/>
            <person name="Howell G.R."/>
            <person name="Burrows C."/>
            <person name="Bird C.P."/>
            <person name="Frankish A."/>
            <person name="Lovell F.L."/>
            <person name="Howe K.L."/>
            <person name="Ashurst J.L."/>
            <person name="Fulton R.S."/>
            <person name="Sudbrak R."/>
            <person name="Wen G."/>
            <person name="Jones M.C."/>
            <person name="Hurles M.E."/>
            <person name="Andrews T.D."/>
            <person name="Scott C.E."/>
            <person name="Searle S."/>
            <person name="Ramser J."/>
            <person name="Whittaker A."/>
            <person name="Deadman R."/>
            <person name="Carter N.P."/>
            <person name="Hunt S.E."/>
            <person name="Chen R."/>
            <person name="Cree A."/>
            <person name="Gunaratne P."/>
            <person name="Havlak P."/>
            <person name="Hodgson A."/>
            <person name="Metzker M.L."/>
            <person name="Richards S."/>
            <person name="Scott G."/>
            <person name="Steffen D."/>
            <person name="Sodergren E."/>
            <person name="Wheeler D.A."/>
            <person name="Worley K.C."/>
            <person name="Ainscough R."/>
            <person name="Ambrose K.D."/>
            <person name="Ansari-Lari M.A."/>
            <person name="Aradhya S."/>
            <person name="Ashwell R.I."/>
            <person name="Babbage A.K."/>
            <person name="Bagguley C.L."/>
            <person name="Ballabio A."/>
            <person name="Banerjee R."/>
            <person name="Barker G.E."/>
            <person name="Barlow K.F."/>
            <person name="Barrett I.P."/>
            <person name="Bates K.N."/>
            <person name="Beare D.M."/>
            <person name="Beasley H."/>
            <person name="Beasley O."/>
            <person name="Beck A."/>
            <person name="Bethel G."/>
            <person name="Blechschmidt K."/>
            <person name="Brady N."/>
            <person name="Bray-Allen S."/>
            <person name="Bridgeman A.M."/>
            <person name="Brown A.J."/>
            <person name="Brown M.J."/>
            <person name="Bonnin D."/>
            <person name="Bruford E.A."/>
            <person name="Buhay C."/>
            <person name="Burch P."/>
            <person name="Burford D."/>
            <person name="Burgess J."/>
            <person name="Burrill W."/>
            <person name="Burton J."/>
            <person name="Bye J.M."/>
            <person name="Carder C."/>
            <person name="Carrel L."/>
            <person name="Chako J."/>
            <person name="Chapman J.C."/>
            <person name="Chavez D."/>
            <person name="Chen E."/>
            <person name="Chen G."/>
            <person name="Chen Y."/>
            <person name="Chen Z."/>
            <person name="Chinault C."/>
            <person name="Ciccodicola A."/>
            <person name="Clark S.Y."/>
            <person name="Clarke G."/>
            <person name="Clee C.M."/>
            <person name="Clegg S."/>
            <person name="Clerc-Blankenburg K."/>
            <person name="Clifford K."/>
            <person name="Cobley V."/>
            <person name="Cole C.G."/>
            <person name="Conquer J.S."/>
            <person name="Corby N."/>
            <person name="Connor R.E."/>
            <person name="David R."/>
            <person name="Davies J."/>
            <person name="Davis C."/>
            <person name="Davis J."/>
            <person name="Delgado O."/>
            <person name="Deshazo D."/>
            <person name="Dhami P."/>
            <person name="Ding Y."/>
            <person name="Dinh H."/>
            <person name="Dodsworth S."/>
            <person name="Draper H."/>
            <person name="Dugan-Rocha S."/>
            <person name="Dunham A."/>
            <person name="Dunn M."/>
            <person name="Durbin K.J."/>
            <person name="Dutta I."/>
            <person name="Eades T."/>
            <person name="Ellwood M."/>
            <person name="Emery-Cohen A."/>
            <person name="Errington H."/>
            <person name="Evans K.L."/>
            <person name="Faulkner L."/>
            <person name="Francis F."/>
            <person name="Frankland J."/>
            <person name="Fraser A.E."/>
            <person name="Galgoczy P."/>
            <person name="Gilbert J."/>
            <person name="Gill R."/>
            <person name="Gloeckner G."/>
            <person name="Gregory S.G."/>
            <person name="Gribble S."/>
            <person name="Griffiths C."/>
            <person name="Grocock R."/>
            <person name="Gu Y."/>
            <person name="Gwilliam R."/>
            <person name="Hamilton C."/>
            <person name="Hart E.A."/>
            <person name="Hawes A."/>
            <person name="Heath P.D."/>
            <person name="Heitmann K."/>
            <person name="Hennig S."/>
            <person name="Hernandez J."/>
            <person name="Hinzmann B."/>
            <person name="Ho S."/>
            <person name="Hoffs M."/>
            <person name="Howden P.J."/>
            <person name="Huckle E.J."/>
            <person name="Hume J."/>
            <person name="Hunt P.J."/>
            <person name="Hunt A.R."/>
            <person name="Isherwood J."/>
            <person name="Jacob L."/>
            <person name="Johnson D."/>
            <person name="Jones S."/>
            <person name="de Jong P.J."/>
            <person name="Joseph S.S."/>
            <person name="Keenan S."/>
            <person name="Kelly S."/>
            <person name="Kershaw J.K."/>
            <person name="Khan Z."/>
            <person name="Kioschis P."/>
            <person name="Klages S."/>
            <person name="Knights A.J."/>
            <person name="Kosiura A."/>
            <person name="Kovar-Smith C."/>
            <person name="Laird G.K."/>
            <person name="Langford C."/>
            <person name="Lawlor S."/>
            <person name="Leversha M."/>
            <person name="Lewis L."/>
            <person name="Liu W."/>
            <person name="Lloyd C."/>
            <person name="Lloyd D.M."/>
            <person name="Loulseged H."/>
            <person name="Loveland J.E."/>
            <person name="Lovell J.D."/>
            <person name="Lozado R."/>
            <person name="Lu J."/>
            <person name="Lyne R."/>
            <person name="Ma J."/>
            <person name="Maheshwari M."/>
            <person name="Matthews L.H."/>
            <person name="McDowall J."/>
            <person name="McLaren S."/>
            <person name="McMurray A."/>
            <person name="Meidl P."/>
            <person name="Meitinger T."/>
            <person name="Milne S."/>
            <person name="Miner G."/>
            <person name="Mistry S.L."/>
            <person name="Morgan M."/>
            <person name="Morris S."/>
            <person name="Mueller I."/>
            <person name="Mullikin J.C."/>
            <person name="Nguyen N."/>
            <person name="Nordsiek G."/>
            <person name="Nyakatura G."/>
            <person name="O'dell C.N."/>
            <person name="Okwuonu G."/>
            <person name="Palmer S."/>
            <person name="Pandian R."/>
            <person name="Parker D."/>
            <person name="Parrish J."/>
            <person name="Pasternak S."/>
            <person name="Patel D."/>
            <person name="Pearce A.V."/>
            <person name="Pearson D.M."/>
            <person name="Pelan S.E."/>
            <person name="Perez L."/>
            <person name="Porter K.M."/>
            <person name="Ramsey Y."/>
            <person name="Reichwald K."/>
            <person name="Rhodes S."/>
            <person name="Ridler K.A."/>
            <person name="Schlessinger D."/>
            <person name="Schueler M.G."/>
            <person name="Sehra H.K."/>
            <person name="Shaw-Smith C."/>
            <person name="Shen H."/>
            <person name="Sheridan E.M."/>
            <person name="Shownkeen R."/>
            <person name="Skuce C.D."/>
            <person name="Smith M.L."/>
            <person name="Sotheran E.C."/>
            <person name="Steingruber H.E."/>
            <person name="Steward C.A."/>
            <person name="Storey R."/>
            <person name="Swann R.M."/>
            <person name="Swarbreck D."/>
            <person name="Tabor P.E."/>
            <person name="Taudien S."/>
            <person name="Taylor T."/>
            <person name="Teague B."/>
            <person name="Thomas K."/>
            <person name="Thorpe A."/>
            <person name="Timms K."/>
            <person name="Tracey A."/>
            <person name="Trevanion S."/>
            <person name="Tromans A.C."/>
            <person name="d'Urso M."/>
            <person name="Verduzco D."/>
            <person name="Villasana D."/>
            <person name="Waldron L."/>
            <person name="Wall M."/>
            <person name="Wang Q."/>
            <person name="Warren J."/>
            <person name="Warry G.L."/>
            <person name="Wei X."/>
            <person name="West A."/>
            <person name="Whitehead S.L."/>
            <person name="Whiteley M.N."/>
            <person name="Wilkinson J.E."/>
            <person name="Willey D.L."/>
            <person name="Williams G."/>
            <person name="Williams L."/>
            <person name="Williamson A."/>
            <person name="Williamson H."/>
            <person name="Wilming L."/>
            <person name="Woodmansey R.L."/>
            <person name="Wray P.W."/>
            <person name="Yen J."/>
            <person name="Zhang J."/>
            <person name="Zhou J."/>
            <person name="Zoghbi H."/>
            <person name="Zorilla S."/>
            <person name="Buck D."/>
            <person name="Reinhardt R."/>
            <person name="Poustka A."/>
            <person name="Rosenthal A."/>
            <person name="Lehrach H."/>
            <person name="Meindl A."/>
            <person name="Minx P.J."/>
            <person name="Hillier L.W."/>
            <person name="Willard H.F."/>
            <person name="Wilson R.K."/>
            <person name="Waterston R.H."/>
            <person name="Rice C.M."/>
            <person name="Vaudin M."/>
            <person name="Coulson A."/>
            <person name="Nelson D.L."/>
            <person name="Weinstock G."/>
            <person name="Sulston J.E."/>
            <person name="Durbin R.M."/>
            <person name="Hubbard T."/>
            <person name="Gibbs R.A."/>
            <person name="Beck S."/>
            <person name="Rogers J."/>
            <person name="Bentley D.R."/>
        </authorList>
    </citation>
    <scope>NUCLEOTIDE SEQUENCE [LARGE SCALE GENOMIC DNA]</scope>
</reference>
<reference key="5">
    <citation type="journal article" date="2004" name="Genome Res.">
        <title>The status, quality, and expansion of the NIH full-length cDNA project: the Mammalian Gene Collection (MGC).</title>
        <authorList>
            <consortium name="The MGC Project Team"/>
        </authorList>
    </citation>
    <scope>NUCLEOTIDE SEQUENCE [LARGE SCALE MRNA] (ISOFORMS 1 AND 2)</scope>
    <source>
        <tissue>Bone marrow</tissue>
        <tissue>Lung</tissue>
        <tissue>Placenta</tissue>
    </source>
</reference>
<reference key="6">
    <citation type="journal article" date="2007" name="Genome Res.">
        <title>Functional persistence of exonized mammalian-wide interspersed repeat elements (MIRs).</title>
        <authorList>
            <person name="Krull M."/>
            <person name="Petrusma M."/>
            <person name="Makalowski W."/>
            <person name="Brosius J."/>
            <person name="Schmitz J."/>
        </authorList>
    </citation>
    <scope>NUCLEOTIDE SEQUENCE [MRNA] OF 345-377</scope>
</reference>
<reference key="7">
    <citation type="journal article" date="2002" name="Mol. Biol. Cell">
        <title>Functional proteomic analysis of human nucleolus.</title>
        <authorList>
            <person name="Scherl A."/>
            <person name="Coute Y."/>
            <person name="Deon C."/>
            <person name="Calle A."/>
            <person name="Kindbeiter K."/>
            <person name="Sanchez J.-C."/>
            <person name="Greco A."/>
            <person name="Hochstrasser D.F."/>
            <person name="Diaz J.-J."/>
        </authorList>
    </citation>
    <scope>SUBCELLULAR LOCATION [LARGE SCALE ANALYSIS]</scope>
    <source>
        <tissue>Cervix carcinoma</tissue>
    </source>
</reference>
<reference key="8">
    <citation type="journal article" date="2005" name="Cell">
        <title>Physical association and coordinate function of the H3 K4 methyltransferase MLL1 and the H4 K16 acetyltransferase MOF.</title>
        <authorList>
            <person name="Dou Y."/>
            <person name="Milne T.A."/>
            <person name="Tackett A.J."/>
            <person name="Smith E.R."/>
            <person name="Fukuda A."/>
            <person name="Wysocka J."/>
            <person name="Allis C.D."/>
            <person name="Chait B.T."/>
            <person name="Hess J.L."/>
            <person name="Roeder R.G."/>
        </authorList>
    </citation>
    <scope>IDENTIFICATION IN THE MLL1/MLL COMPLEX</scope>
</reference>
<reference key="9">
    <citation type="journal article" date="2006" name="Nat. Biotechnol.">
        <title>A probability-based approach for high-throughput protein phosphorylation analysis and site localization.</title>
        <authorList>
            <person name="Beausoleil S.A."/>
            <person name="Villen J."/>
            <person name="Gerber S.A."/>
            <person name="Rush J."/>
            <person name="Gygi S.P."/>
        </authorList>
    </citation>
    <scope>PHOSPHORYLATION [LARGE SCALE ANALYSIS] AT SER-523</scope>
    <scope>IDENTIFICATION BY MASS SPECTROMETRY [LARGE SCALE ANALYSIS]</scope>
    <source>
        <tissue>Cervix carcinoma</tissue>
    </source>
</reference>
<reference key="10">
    <citation type="journal article" date="2008" name="Mol. Cell">
        <title>Kinase-selective enrichment enables quantitative phosphoproteomics of the kinome across the cell cycle.</title>
        <authorList>
            <person name="Daub H."/>
            <person name="Olsen J.V."/>
            <person name="Bairlein M."/>
            <person name="Gnad F."/>
            <person name="Oppermann F.S."/>
            <person name="Korner R."/>
            <person name="Greff Z."/>
            <person name="Keri G."/>
            <person name="Stemmann O."/>
            <person name="Mann M."/>
        </authorList>
    </citation>
    <scope>PHOSPHORYLATION [LARGE SCALE ANALYSIS] AT SER-523</scope>
    <scope>IDENTIFICATION BY MASS SPECTROMETRY [LARGE SCALE ANALYSIS]</scope>
    <source>
        <tissue>Cervix carcinoma</tissue>
    </source>
</reference>
<reference key="11">
    <citation type="journal article" date="2009" name="Anal. Chem.">
        <title>Lys-N and trypsin cover complementary parts of the phosphoproteome in a refined SCX-based approach.</title>
        <authorList>
            <person name="Gauci S."/>
            <person name="Helbig A.O."/>
            <person name="Slijper M."/>
            <person name="Krijgsveld J."/>
            <person name="Heck A.J."/>
            <person name="Mohammed S."/>
        </authorList>
    </citation>
    <scope>IDENTIFICATION BY MASS SPECTROMETRY [LARGE SCALE ANALYSIS]</scope>
</reference>
<reference key="12">
    <citation type="journal article" date="2009" name="Sci. Signal.">
        <title>Quantitative phosphoproteomic analysis of T cell receptor signaling reveals system-wide modulation of protein-protein interactions.</title>
        <authorList>
            <person name="Mayya V."/>
            <person name="Lundgren D.H."/>
            <person name="Hwang S.-I."/>
            <person name="Rezaul K."/>
            <person name="Wu L."/>
            <person name="Eng J.K."/>
            <person name="Rodionov V."/>
            <person name="Han D.K."/>
        </authorList>
    </citation>
    <scope>PHOSPHORYLATION [LARGE SCALE ANALYSIS] AT SER-617</scope>
    <scope>IDENTIFICATION BY MASS SPECTROMETRY [LARGE SCALE ANALYSIS]</scope>
    <source>
        <tissue>Leukemic T-cell</tissue>
    </source>
</reference>
<reference key="13">
    <citation type="journal article" date="2010" name="Mol. Cell. Biol.">
        <title>Las1L is a nucleolar protein required for cell proliferation and ribosome biogenesis.</title>
        <authorList>
            <person name="Castle C.D."/>
            <person name="Cassimere E.K."/>
            <person name="Lee J."/>
            <person name="Denicourt C."/>
        </authorList>
    </citation>
    <scope>FUNCTION</scope>
    <scope>SUBCELLULAR LOCATION</scope>
</reference>
<reference key="14">
    <citation type="journal article" date="2010" name="Sci. Signal.">
        <title>Quantitative phosphoproteomics reveals widespread full phosphorylation site occupancy during mitosis.</title>
        <authorList>
            <person name="Olsen J.V."/>
            <person name="Vermeulen M."/>
            <person name="Santamaria A."/>
            <person name="Kumar C."/>
            <person name="Miller M.L."/>
            <person name="Jensen L.J."/>
            <person name="Gnad F."/>
            <person name="Cox J."/>
            <person name="Jensen T.S."/>
            <person name="Nigg E.A."/>
            <person name="Brunak S."/>
            <person name="Mann M."/>
        </authorList>
    </citation>
    <scope>PHOSPHORYLATION [LARGE SCALE ANALYSIS] AT SER-560 AND SER-617</scope>
    <scope>IDENTIFICATION BY MASS SPECTROMETRY [LARGE SCALE ANALYSIS]</scope>
    <source>
        <tissue>Cervix carcinoma</tissue>
    </source>
</reference>
<reference key="15">
    <citation type="journal article" date="2011" name="BMC Syst. Biol.">
        <title>Initial characterization of the human central proteome.</title>
        <authorList>
            <person name="Burkard T.R."/>
            <person name="Planyavsky M."/>
            <person name="Kaupe I."/>
            <person name="Breitwieser F.P."/>
            <person name="Buerckstuemmer T."/>
            <person name="Bennett K.L."/>
            <person name="Superti-Furga G."/>
            <person name="Colinge J."/>
        </authorList>
    </citation>
    <scope>IDENTIFICATION BY MASS SPECTROMETRY [LARGE SCALE ANALYSIS]</scope>
</reference>
<reference key="16">
    <citation type="journal article" date="2011" name="Sci. Signal.">
        <title>System-wide temporal characterization of the proteome and phosphoproteome of human embryonic stem cell differentiation.</title>
        <authorList>
            <person name="Rigbolt K.T."/>
            <person name="Prokhorova T.A."/>
            <person name="Akimov V."/>
            <person name="Henningsen J."/>
            <person name="Johansen P.T."/>
            <person name="Kratchmarova I."/>
            <person name="Kassem M."/>
            <person name="Mann M."/>
            <person name="Olsen J.V."/>
            <person name="Blagoev B."/>
        </authorList>
    </citation>
    <scope>PHOSPHORYLATION [LARGE SCALE ANALYSIS] AT SER-560 AND SER-617</scope>
    <scope>IDENTIFICATION BY MASS SPECTROMETRY [LARGE SCALE ANALYSIS]</scope>
</reference>
<reference key="17">
    <citation type="journal article" date="2012" name="Mol. Cell. Biol.">
        <title>The evolutionarily conserved protein Las1 is required for pre-rRNA processing at both ends of ITS2.</title>
        <authorList>
            <person name="Schillewaert S."/>
            <person name="Wacheul L."/>
            <person name="Lhomme F."/>
            <person name="Lafontaine D.L."/>
        </authorList>
    </citation>
    <scope>FUNCTION</scope>
</reference>
<reference key="18">
    <citation type="journal article" date="2012" name="Mol. Cell. Proteomics">
        <title>Five friends of methylated chromatin target of protein-arginine-methyltransferase[prmt]-1 (chtop), a complex linking arginine methylation to desumoylation.</title>
        <authorList>
            <person name="Fanis P."/>
            <person name="Gillemans N."/>
            <person name="Aghajanirefah A."/>
            <person name="Pourfarzad F."/>
            <person name="Demmers J."/>
            <person name="Esteghamat F."/>
            <person name="Vadlamudi R.K."/>
            <person name="Grosveld F."/>
            <person name="Philipsen S."/>
            <person name="van Dijk T.B."/>
        </authorList>
    </citation>
    <scope>FUNCTION</scope>
    <scope>IDENTIFICATION IN THE 5FMC COMPLEX</scope>
</reference>
<reference key="19">
    <citation type="journal article" date="2013" name="J. Proteome Res.">
        <title>Toward a comprehensive characterization of a human cancer cell phosphoproteome.</title>
        <authorList>
            <person name="Zhou H."/>
            <person name="Di Palma S."/>
            <person name="Preisinger C."/>
            <person name="Peng M."/>
            <person name="Polat A.N."/>
            <person name="Heck A.J."/>
            <person name="Mohammed S."/>
        </authorList>
    </citation>
    <scope>PHOSPHORYLATION [LARGE SCALE ANALYSIS] AT SER-441; SER-523; SER-560 AND SER-617</scope>
    <scope>IDENTIFICATION BY MASS SPECTROMETRY [LARGE SCALE ANALYSIS]</scope>
    <source>
        <tissue>Cervix carcinoma</tissue>
        <tissue>Erythroleukemia</tissue>
    </source>
</reference>
<reference key="20">
    <citation type="journal article" date="2014" name="J. Proteomics">
        <title>An enzyme assisted RP-RPLC approach for in-depth analysis of human liver phosphoproteome.</title>
        <authorList>
            <person name="Bian Y."/>
            <person name="Song C."/>
            <person name="Cheng K."/>
            <person name="Dong M."/>
            <person name="Wang F."/>
            <person name="Huang J."/>
            <person name="Sun D."/>
            <person name="Wang L."/>
            <person name="Ye M."/>
            <person name="Zou H."/>
        </authorList>
    </citation>
    <scope>PHOSPHORYLATION [LARGE SCALE ANALYSIS] AT SER-617</scope>
    <scope>IDENTIFICATION BY MASS SPECTROMETRY [LARGE SCALE ANALYSIS]</scope>
    <source>
        <tissue>Liver</tissue>
    </source>
</reference>
<reference key="21">
    <citation type="journal article" date="2016" name="Mol. Psychiatry">
        <title>X-exome sequencing of 405 unresolved families identifies seven novel intellectual disability genes.</title>
        <authorList>
            <person name="Hu H."/>
            <person name="Haas S.A."/>
            <person name="Chelly J."/>
            <person name="Van Esch H."/>
            <person name="Raynaud M."/>
            <person name="de Brouwer A.P."/>
            <person name="Weinert S."/>
            <person name="Froyen G."/>
            <person name="Frints S.G."/>
            <person name="Laumonnier F."/>
            <person name="Zemojtel T."/>
            <person name="Love M.I."/>
            <person name="Richard H."/>
            <person name="Emde A.K."/>
            <person name="Bienek M."/>
            <person name="Jensen C."/>
            <person name="Hambrock M."/>
            <person name="Fischer U."/>
            <person name="Langnick C."/>
            <person name="Feldkamp M."/>
            <person name="Wissink-Lindhout W."/>
            <person name="Lebrun N."/>
            <person name="Castelnau L."/>
            <person name="Rucci J."/>
            <person name="Montjean R."/>
            <person name="Dorseuil O."/>
            <person name="Billuart P."/>
            <person name="Stuhlmann T."/>
            <person name="Shaw M."/>
            <person name="Corbett M.A."/>
            <person name="Gardner A."/>
            <person name="Willis-Owen S."/>
            <person name="Tan C."/>
            <person name="Friend K.L."/>
            <person name="Belet S."/>
            <person name="van Roozendaal K.E."/>
            <person name="Jimenez-Pocquet M."/>
            <person name="Moizard M.P."/>
            <person name="Ronce N."/>
            <person name="Sun R."/>
            <person name="O'Keeffe S."/>
            <person name="Chenna R."/>
            <person name="van Boemmel A."/>
            <person name="Goeke J."/>
            <person name="Hackett A."/>
            <person name="Field M."/>
            <person name="Christie L."/>
            <person name="Boyle J."/>
            <person name="Haan E."/>
            <person name="Nelson J."/>
            <person name="Turner G."/>
            <person name="Baynam G."/>
            <person name="Gillessen-Kaesbach G."/>
            <person name="Mueller U."/>
            <person name="Steinberger D."/>
            <person name="Budny B."/>
            <person name="Badura-Stronka M."/>
            <person name="Latos-Bielenska A."/>
            <person name="Ousager L.B."/>
            <person name="Wieacker P."/>
            <person name="Rodriguez Criado G."/>
            <person name="Bondeson M.L."/>
            <person name="Anneren G."/>
            <person name="Dufke A."/>
            <person name="Cohen M."/>
            <person name="Van Maldergem L."/>
            <person name="Vincent-Delorme C."/>
            <person name="Echenne B."/>
            <person name="Simon-Bouy B."/>
            <person name="Kleefstra T."/>
            <person name="Willemsen M."/>
            <person name="Fryns J.P."/>
            <person name="Devriendt K."/>
            <person name="Ullmann R."/>
            <person name="Vingron M."/>
            <person name="Wrogemann K."/>
            <person name="Wienker T.F."/>
            <person name="Tzschach A."/>
            <person name="van Bokhoven H."/>
            <person name="Gecz J."/>
            <person name="Jentsch T.J."/>
            <person name="Chen W."/>
            <person name="Ropers H.H."/>
            <person name="Kalscheuer V.M."/>
        </authorList>
    </citation>
    <scope>INVOLVEMENT IN WTS</scope>
    <scope>VARIANTS WTS GLY-269 AND TRP-415</scope>
</reference>
<reference key="22">
    <citation type="journal article" date="2017" name="Nat. Struct. Mol. Biol.">
        <title>Site-specific mapping of the human SUMO proteome reveals co-modification with phosphorylation.</title>
        <authorList>
            <person name="Hendriks I.A."/>
            <person name="Lyon D."/>
            <person name="Young C."/>
            <person name="Jensen L.J."/>
            <person name="Vertegaal A.C."/>
            <person name="Nielsen M.L."/>
        </authorList>
    </citation>
    <scope>SUMOYLATION [LARGE SCALE ANALYSIS] AT LYS-215 AND LYS-226</scope>
    <scope>IDENTIFICATION BY MASS SPECTROMETRY [LARGE SCALE ANALYSIS]</scope>
</reference>
<reference key="23">
    <citation type="journal article" date="2019" name="J. Mol. Biol.">
        <title>Nol9 Is a Spatial Regulator for the Human ITS2 Pre-rRNA Endonuclease-Kinase Complex.</title>
        <authorList>
            <person name="Gordon J."/>
            <person name="Pillon M.C."/>
            <person name="Stanley R.E."/>
        </authorList>
    </citation>
    <scope>INTERACTION WITH NOL9</scope>
    <scope>SUBCELLULAR LOCATION</scope>
</reference>
<reference key="24">
    <citation type="journal article" date="2006" name="Science">
        <title>The consensus coding sequences of human breast and colorectal cancers.</title>
        <authorList>
            <person name="Sjoeblom T."/>
            <person name="Jones S."/>
            <person name="Wood L.D."/>
            <person name="Parsons D.W."/>
            <person name="Lin J."/>
            <person name="Barber T.D."/>
            <person name="Mandelker D."/>
            <person name="Leary R.J."/>
            <person name="Ptak J."/>
            <person name="Silliman N."/>
            <person name="Szabo S."/>
            <person name="Buckhaults P."/>
            <person name="Farrell C."/>
            <person name="Meeh P."/>
            <person name="Markowitz S.D."/>
            <person name="Willis J."/>
            <person name="Dawson D."/>
            <person name="Willson J.K.V."/>
            <person name="Gazdar A.F."/>
            <person name="Hartigan J."/>
            <person name="Wu L."/>
            <person name="Liu C."/>
            <person name="Parmigiani G."/>
            <person name="Park B.H."/>
            <person name="Bachman K.E."/>
            <person name="Papadopoulos N."/>
            <person name="Vogelstein B."/>
            <person name="Kinzler K.W."/>
            <person name="Velculescu V.E."/>
        </authorList>
    </citation>
    <scope>VARIANT [LARGE SCALE ANALYSIS] CYS-170</scope>
</reference>
<accession>Q9Y4W2</accession>
<accession>A9X410</accession>
<accession>Q5JXQ0</accession>
<accession>Q8TEN5</accession>
<accession>Q9H9V5</accession>
<dbReference type="EC" id="3.1.-.-"/>
<dbReference type="EMBL" id="AF116730">
    <property type="protein sequence ID" value="AAO15306.1"/>
    <property type="molecule type" value="mRNA"/>
</dbReference>
<dbReference type="EMBL" id="AK074087">
    <property type="protein sequence ID" value="BAB84913.1"/>
    <property type="status" value="ALT_INIT"/>
    <property type="molecule type" value="mRNA"/>
</dbReference>
<dbReference type="EMBL" id="AK022587">
    <property type="protein sequence ID" value="BAB14114.1"/>
    <property type="molecule type" value="mRNA"/>
</dbReference>
<dbReference type="EMBL" id="AL050306">
    <property type="status" value="NOT_ANNOTATED_CDS"/>
    <property type="molecule type" value="Genomic_DNA"/>
</dbReference>
<dbReference type="EMBL" id="BC014545">
    <property type="protein sequence ID" value="AAH14545.1"/>
    <property type="molecule type" value="mRNA"/>
</dbReference>
<dbReference type="EMBL" id="BC018610">
    <property type="protein sequence ID" value="AAH18610.1"/>
    <property type="molecule type" value="mRNA"/>
</dbReference>
<dbReference type="EMBL" id="BC019302">
    <property type="protein sequence ID" value="AAH19302.1"/>
    <property type="molecule type" value="mRNA"/>
</dbReference>
<dbReference type="EMBL" id="DQ323624">
    <property type="protein sequence ID" value="ABD39127.1"/>
    <property type="molecule type" value="mRNA"/>
</dbReference>
<dbReference type="CCDS" id="CCDS14381.1">
    <molecule id="Q9Y4W2-1"/>
</dbReference>
<dbReference type="CCDS" id="CCDS55433.1">
    <molecule id="Q9Y4W2-3"/>
</dbReference>
<dbReference type="CCDS" id="CCDS55434.1">
    <molecule id="Q9Y4W2-2"/>
</dbReference>
<dbReference type="RefSeq" id="NP_001164120.1">
    <molecule id="Q9Y4W2-2"/>
    <property type="nucleotide sequence ID" value="NM_001170649.2"/>
</dbReference>
<dbReference type="RefSeq" id="NP_001164121.1">
    <molecule id="Q9Y4W2-3"/>
    <property type="nucleotide sequence ID" value="NM_001170650.2"/>
</dbReference>
<dbReference type="RefSeq" id="NP_112483.1">
    <molecule id="Q9Y4W2-1"/>
    <property type="nucleotide sequence ID" value="NM_031206.7"/>
</dbReference>
<dbReference type="PDB" id="8FL2">
    <property type="method" value="EM"/>
    <property type="resolution" value="2.67 A"/>
    <property type="chains" value="BD=1-734"/>
</dbReference>
<dbReference type="PDB" id="8FL3">
    <property type="method" value="EM"/>
    <property type="resolution" value="2.53 A"/>
    <property type="chains" value="BD=1-734"/>
</dbReference>
<dbReference type="PDB" id="8FL4">
    <property type="method" value="EM"/>
    <property type="resolution" value="2.89 A"/>
    <property type="chains" value="BD=1-734"/>
</dbReference>
<dbReference type="PDBsum" id="8FL2"/>
<dbReference type="PDBsum" id="8FL3"/>
<dbReference type="PDBsum" id="8FL4"/>
<dbReference type="EMDB" id="EMD-29265"/>
<dbReference type="EMDB" id="EMD-29266"/>
<dbReference type="EMDB" id="EMD-29267"/>
<dbReference type="SMR" id="Q9Y4W2"/>
<dbReference type="BioGRID" id="123620">
    <property type="interactions" value="195"/>
</dbReference>
<dbReference type="ComplexPortal" id="CPX-8081">
    <property type="entry name" value="Rixosome RNA degradation complex"/>
</dbReference>
<dbReference type="CORUM" id="Q9Y4W2"/>
<dbReference type="ELM" id="Q9Y4W2"/>
<dbReference type="FunCoup" id="Q9Y4W2">
    <property type="interactions" value="1942"/>
</dbReference>
<dbReference type="IntAct" id="Q9Y4W2">
    <property type="interactions" value="109"/>
</dbReference>
<dbReference type="MINT" id="Q9Y4W2"/>
<dbReference type="STRING" id="9606.ENSP00000363944"/>
<dbReference type="GlyGen" id="Q9Y4W2">
    <property type="glycosylation" value="2 sites, 1 O-linked glycan (1 site)"/>
</dbReference>
<dbReference type="iPTMnet" id="Q9Y4W2"/>
<dbReference type="PhosphoSitePlus" id="Q9Y4W2"/>
<dbReference type="SwissPalm" id="Q9Y4W2"/>
<dbReference type="BioMuta" id="LAS1L"/>
<dbReference type="DMDM" id="73920837"/>
<dbReference type="jPOST" id="Q9Y4W2"/>
<dbReference type="MassIVE" id="Q9Y4W2"/>
<dbReference type="PaxDb" id="9606-ENSP00000363944"/>
<dbReference type="PeptideAtlas" id="Q9Y4W2"/>
<dbReference type="ProteomicsDB" id="86250">
    <molecule id="Q9Y4W2-1"/>
</dbReference>
<dbReference type="ProteomicsDB" id="86251">
    <molecule id="Q9Y4W2-2"/>
</dbReference>
<dbReference type="ProteomicsDB" id="86252">
    <molecule id="Q9Y4W2-3"/>
</dbReference>
<dbReference type="ProteomicsDB" id="86253">
    <molecule id="Q9Y4W2-4"/>
</dbReference>
<dbReference type="Pumba" id="Q9Y4W2"/>
<dbReference type="Antibodypedia" id="13076">
    <property type="antibodies" value="157 antibodies from 26 providers"/>
</dbReference>
<dbReference type="DNASU" id="81887"/>
<dbReference type="Ensembl" id="ENST00000374804.9">
    <molecule id="Q9Y4W2-3"/>
    <property type="protein sequence ID" value="ENSP00000363937.5"/>
    <property type="gene ID" value="ENSG00000001497.18"/>
</dbReference>
<dbReference type="Ensembl" id="ENST00000374807.9">
    <molecule id="Q9Y4W2-2"/>
    <property type="protein sequence ID" value="ENSP00000363940.5"/>
    <property type="gene ID" value="ENSG00000001497.18"/>
</dbReference>
<dbReference type="Ensembl" id="ENST00000374811.8">
    <molecule id="Q9Y4W2-1"/>
    <property type="protein sequence ID" value="ENSP00000363944.3"/>
    <property type="gene ID" value="ENSG00000001497.18"/>
</dbReference>
<dbReference type="Ensembl" id="ENST00000484069.1">
    <molecule id="Q9Y4W2-4"/>
    <property type="protein sequence ID" value="ENSP00000473471.1"/>
    <property type="gene ID" value="ENSG00000001497.18"/>
</dbReference>
<dbReference type="GeneID" id="81887"/>
<dbReference type="KEGG" id="hsa:81887"/>
<dbReference type="MANE-Select" id="ENST00000374811.8">
    <property type="protein sequence ID" value="ENSP00000363944.3"/>
    <property type="RefSeq nucleotide sequence ID" value="NM_031206.7"/>
    <property type="RefSeq protein sequence ID" value="NP_112483.1"/>
</dbReference>
<dbReference type="UCSC" id="uc004dwa.3">
    <molecule id="Q9Y4W2-1"/>
    <property type="organism name" value="human"/>
</dbReference>
<dbReference type="AGR" id="HGNC:25726"/>
<dbReference type="CTD" id="81887"/>
<dbReference type="DisGeNET" id="81887"/>
<dbReference type="GeneCards" id="LAS1L"/>
<dbReference type="HGNC" id="HGNC:25726">
    <property type="gene designation" value="LAS1L"/>
</dbReference>
<dbReference type="HPA" id="ENSG00000001497">
    <property type="expression patterns" value="Low tissue specificity"/>
</dbReference>
<dbReference type="MalaCards" id="LAS1L"/>
<dbReference type="MIM" id="300964">
    <property type="type" value="gene"/>
</dbReference>
<dbReference type="MIM" id="309585">
    <property type="type" value="phenotype"/>
</dbReference>
<dbReference type="neXtProt" id="NX_Q9Y4W2"/>
<dbReference type="OpenTargets" id="ENSG00000001497"/>
<dbReference type="Orphanet" id="404521">
    <property type="disease" value="Spinal muscular atrophy with respiratory distress type 2"/>
</dbReference>
<dbReference type="Orphanet" id="3459">
    <property type="disease" value="Wilson-Turner syndrome"/>
</dbReference>
<dbReference type="PharmGKB" id="PA128394732"/>
<dbReference type="VEuPathDB" id="HostDB:ENSG00000001497"/>
<dbReference type="eggNOG" id="KOG2425">
    <property type="taxonomic scope" value="Eukaryota"/>
</dbReference>
<dbReference type="GeneTree" id="ENSGT00390000014785"/>
<dbReference type="HOGENOM" id="CLU_028117_0_0_1"/>
<dbReference type="InParanoid" id="Q9Y4W2"/>
<dbReference type="OMA" id="QCNKQVS"/>
<dbReference type="OrthoDB" id="10263222at2759"/>
<dbReference type="PAN-GO" id="Q9Y4W2">
    <property type="GO annotations" value="3 GO annotations based on evolutionary models"/>
</dbReference>
<dbReference type="PhylomeDB" id="Q9Y4W2"/>
<dbReference type="TreeFam" id="TF314042"/>
<dbReference type="PathwayCommons" id="Q9Y4W2"/>
<dbReference type="Reactome" id="R-HSA-6791226">
    <property type="pathway name" value="Major pathway of rRNA processing in the nucleolus and cytosol"/>
</dbReference>
<dbReference type="SignaLink" id="Q9Y4W2"/>
<dbReference type="SIGNOR" id="Q9Y4W2"/>
<dbReference type="BioGRID-ORCS" id="81887">
    <property type="hits" value="432 hits in 761 CRISPR screens"/>
</dbReference>
<dbReference type="CD-CODE" id="91857CE7">
    <property type="entry name" value="Nucleolus"/>
</dbReference>
<dbReference type="ChiTaRS" id="LAS1L">
    <property type="organism name" value="human"/>
</dbReference>
<dbReference type="GeneWiki" id="LAS1L"/>
<dbReference type="GenomeRNAi" id="81887"/>
<dbReference type="Pharos" id="Q9Y4W2">
    <property type="development level" value="Tbio"/>
</dbReference>
<dbReference type="PRO" id="PR:Q9Y4W2"/>
<dbReference type="Proteomes" id="UP000005640">
    <property type="component" value="Chromosome X"/>
</dbReference>
<dbReference type="RNAct" id="Q9Y4W2">
    <property type="molecule type" value="protein"/>
</dbReference>
<dbReference type="Bgee" id="ENSG00000001497">
    <property type="expression patterns" value="Expressed in right hemisphere of cerebellum and 202 other cell types or tissues"/>
</dbReference>
<dbReference type="ExpressionAtlas" id="Q9Y4W2">
    <property type="expression patterns" value="baseline and differential"/>
</dbReference>
<dbReference type="GO" id="GO:0090730">
    <property type="term" value="C:Las1 complex"/>
    <property type="evidence" value="ECO:0007669"/>
    <property type="project" value="InterPro"/>
</dbReference>
<dbReference type="GO" id="GO:0016020">
    <property type="term" value="C:membrane"/>
    <property type="evidence" value="ECO:0007005"/>
    <property type="project" value="UniProtKB"/>
</dbReference>
<dbReference type="GO" id="GO:0071339">
    <property type="term" value="C:MLL1 complex"/>
    <property type="evidence" value="ECO:0000314"/>
    <property type="project" value="UniProtKB"/>
</dbReference>
<dbReference type="GO" id="GO:0005730">
    <property type="term" value="C:nucleolus"/>
    <property type="evidence" value="ECO:0000314"/>
    <property type="project" value="UniProtKB"/>
</dbReference>
<dbReference type="GO" id="GO:0005654">
    <property type="term" value="C:nucleoplasm"/>
    <property type="evidence" value="ECO:0000304"/>
    <property type="project" value="Reactome"/>
</dbReference>
<dbReference type="GO" id="GO:0005634">
    <property type="term" value="C:nucleus"/>
    <property type="evidence" value="ECO:0000318"/>
    <property type="project" value="GO_Central"/>
</dbReference>
<dbReference type="GO" id="GO:0004519">
    <property type="term" value="F:endonuclease activity"/>
    <property type="evidence" value="ECO:0007669"/>
    <property type="project" value="InterPro"/>
</dbReference>
<dbReference type="GO" id="GO:0003723">
    <property type="term" value="F:RNA binding"/>
    <property type="evidence" value="ECO:0007005"/>
    <property type="project" value="UniProtKB"/>
</dbReference>
<dbReference type="GO" id="GO:0000460">
    <property type="term" value="P:maturation of 5.8S rRNA"/>
    <property type="evidence" value="ECO:0000318"/>
    <property type="project" value="GO_Central"/>
</dbReference>
<dbReference type="GO" id="GO:0000470">
    <property type="term" value="P:maturation of LSU-rRNA"/>
    <property type="evidence" value="ECO:0000318"/>
    <property type="project" value="GO_Central"/>
</dbReference>
<dbReference type="GO" id="GO:0006364">
    <property type="term" value="P:rRNA processing"/>
    <property type="evidence" value="ECO:0000314"/>
    <property type="project" value="UniProtKB"/>
</dbReference>
<dbReference type="InterPro" id="IPR007174">
    <property type="entry name" value="Las1"/>
</dbReference>
<dbReference type="PANTHER" id="PTHR15002">
    <property type="entry name" value="RIBOSOMAL BIOGENESIS PROTEIN LAS1L"/>
    <property type="match status" value="1"/>
</dbReference>
<dbReference type="PANTHER" id="PTHR15002:SF0">
    <property type="entry name" value="RIBOSOMAL BIOGENESIS PROTEIN LAS1L"/>
    <property type="match status" value="1"/>
</dbReference>
<dbReference type="Pfam" id="PF04031">
    <property type="entry name" value="Las1"/>
    <property type="match status" value="1"/>
</dbReference>
<name>LAS1L_HUMAN</name>
<protein>
    <recommendedName>
        <fullName>Ribosomal biogenesis protein LAS1L</fullName>
    </recommendedName>
    <alternativeName>
        <fullName evidence="12">Endoribonuclease LAS1L</fullName>
        <ecNumber>3.1.-.-</ecNumber>
    </alternativeName>
    <alternativeName>
        <fullName>Protein LAS1 homolog</fullName>
    </alternativeName>
</protein>
<proteinExistence type="evidence at protein level"/>
<sequence>MSWESGAGPGLGSQGMDLVWSAWYGKCVKGKGSLPLSAHGIVVAWLSRAEWDQVTVYLFCDDHKLQRYALNRITVWRSRSGNELPLAVASTADLIRCKLLDVTGGLGTDELRLLYGMALVRFVNLISERKTKFAKVPLKCLAQEVNIPDWIVDLRHELTHKKMPHINDCRRGCYFVLDWLQKTYWCRQLENSLRETWELEEFREGIEEEDQEEDKNIVVDDITEQKPEPQDDGKSTESDVKADGDSKGSEEVDSHCKKALSHKELYERARELLVSYEEEQFTVLEKFRYLPKAIKAWNNPSPRVECVLAELKGVTCENREAVLDAFLDDGFLVPTFEQLAALQIEYEDGQTEVQRGEGTDPKSHKNVDLNDVLVPKPFSQFWQPLLRGLHSQNFTQALLERMLSELPALGISGIRPTYILRWTVELIVANTKTGRNARRFSAGQWEARRGWRLFNCSASLDWPRMVESCLGSPCWASPQLLRIIFKAMGQGLPDEEQEKLLRICSIYTQSGENSLVQEGSEASPIGKSPYTLDSLYWSVKPASSSFGSEAKAQQQEEQGSVNDVKEEEKEEKEVLPDQVEEEEENDDQEEEEEDEDDEDDEEEDRMEVGPFSTGQESPTAENARLLAQKRGALQGSAWQVSSEDVRWDTFPLGRMPGQTEDPAELMLENYDTMYLLDQPVLEQRLEPSTCKTDTLGLSCGVGSGNCSNSSSSNFEGLLWSQGQLHGLKTGLQLF</sequence>
<evidence type="ECO:0000250" key="1">
    <source>
        <dbReference type="UniProtKB" id="A2BE28"/>
    </source>
</evidence>
<evidence type="ECO:0000256" key="2">
    <source>
        <dbReference type="SAM" id="MobiDB-lite"/>
    </source>
</evidence>
<evidence type="ECO:0000269" key="3">
    <source>
    </source>
</evidence>
<evidence type="ECO:0000269" key="4">
    <source>
    </source>
</evidence>
<evidence type="ECO:0000269" key="5">
    <source>
    </source>
</evidence>
<evidence type="ECO:0000269" key="6">
    <source>
    </source>
</evidence>
<evidence type="ECO:0000269" key="7">
    <source>
    </source>
</evidence>
<evidence type="ECO:0000269" key="8">
    <source>
    </source>
</evidence>
<evidence type="ECO:0000269" key="9">
    <source>
    </source>
</evidence>
<evidence type="ECO:0000269" key="10">
    <source>
    </source>
</evidence>
<evidence type="ECO:0000303" key="11">
    <source>
    </source>
</evidence>
<evidence type="ECO:0000303" key="12">
    <source>
    </source>
</evidence>
<evidence type="ECO:0000303" key="13">
    <source ref="2"/>
</evidence>
<evidence type="ECO:0000305" key="14"/>
<evidence type="ECO:0007744" key="15">
    <source>
    </source>
</evidence>
<evidence type="ECO:0007744" key="16">
    <source>
    </source>
</evidence>
<evidence type="ECO:0007744" key="17">
    <source>
    </source>
</evidence>
<evidence type="ECO:0007744" key="18">
    <source>
    </source>
</evidence>
<evidence type="ECO:0007744" key="19">
    <source>
    </source>
</evidence>
<evidence type="ECO:0007744" key="20">
    <source>
    </source>
</evidence>
<evidence type="ECO:0007744" key="21">
    <source>
    </source>
</evidence>
<evidence type="ECO:0007744" key="22">
    <source>
    </source>
</evidence>
<comment type="function">
    <text evidence="6 7 8">Required for the synthesis of the 60S ribosomal subunit and maturation of the 28S rRNA (PubMed:20647540). Functions as a component of the Five Friends of Methylated CHTOP (5FMC) complex; the 5FMC complex is recruited to ZNF148 by methylated CHTOP, leading to desumoylation of ZNF148 and subsequent transactivation of ZNF148 target genes (PubMed:22872859). Required for the efficient pre-rRNA processing at both ends of internal transcribed spacer 2 (ITS2) (PubMed:22083961).</text>
</comment>
<comment type="subunit">
    <text evidence="4 8 10">Component of some MLL1/MLL complex, at least composed of the core components KMT2A/MLL1, ASH2L, HCFC1/HCF1, WDR5 and RBBP5, as well as the facultative components BACC1, CHD8, E2F6, HSP70, INO80C, KANSL1, LAS1L, MAX, MCRS1, MGA, KAT8/MOF, PELP1, PHF20, PRP31, RING2, RUVB1/TIP49A, RUVB2/TIP49B, SENP3, TAF1, TAF4, TAF6, TAF7, TAF9 and TEX10. Component of the 5FMC complex, at least composed of PELP1, LAS1L, TEX10, WDR18 and SENP3; the complex interacts with methylated CHTOP and ZNF148. Interacts with NOL9 to form an ITS2 pre-rRNA endonuclease-kinase complex (PubMed:31288032).</text>
</comment>
<comment type="interaction">
    <interactant intactId="EBI-1051591">
        <id>Q9Y4W2</id>
    </interactant>
    <interactant intactId="EBI-25475797">
        <id>PRO_0000037309</id>
        <label>rep</label>
        <dbReference type="UniProtKB" id="P0C6X7"/>
    </interactant>
    <organismsDiffer>true</organismsDiffer>
    <experiments>2</experiments>
</comment>
<comment type="subcellular location">
    <subcellularLocation>
        <location evidence="3 6">Nucleus</location>
        <location evidence="3 6">Nucleolus</location>
    </subcellularLocation>
    <subcellularLocation>
        <location evidence="1">Nucleus</location>
        <location evidence="1">Nucleoplasm</location>
    </subcellularLocation>
    <subcellularLocation>
        <location evidence="1">Cytoplasm</location>
    </subcellularLocation>
    <text evidence="1">Mainly found in the nucleoplasm, with low levels detected in the cytoplasmic and chromatin fractions (By similarity). Localizes mainly to the granular component, the region implicated in the later steps of rRNA processing and subunit assembly and export.</text>
</comment>
<comment type="alternative products">
    <event type="alternative splicing"/>
    <isoform>
        <id>Q9Y4W2-1</id>
        <name>1</name>
        <sequence type="displayed"/>
    </isoform>
    <isoform>
        <id>Q9Y4W2-2</id>
        <name>2</name>
        <sequence type="described" ref="VSP_015181"/>
    </isoform>
    <isoform>
        <id>Q9Y4W2-3</id>
        <name>3</name>
        <sequence type="described" ref="VSP_015178 VSP_015181"/>
    </isoform>
    <isoform>
        <id>Q9Y4W2-4</id>
        <name>4</name>
        <sequence type="described" ref="VSP_015179 VSP_015180"/>
    </isoform>
</comment>
<comment type="disease" evidence="9">
    <disease id="DI-03554">
        <name>Intellectual developmental disorder, X-linked, syndromic, Wilson-Turner type</name>
        <acronym>WTS</acronym>
        <description>A neurologic disorder characterized by severe intellectual disability, dysmorphic facial features, hypogonadism, short stature, and truncal obesity. Affected females have a milder phenotype than affected males.</description>
        <dbReference type="MIM" id="309585"/>
    </disease>
    <text>The disease is caused by variants affecting the gene represented in this entry.</text>
</comment>
<comment type="similarity">
    <text evidence="14">Belongs to the LAS1 family.</text>
</comment>
<comment type="sequence caution" evidence="14">
    <conflict type="erroneous initiation">
        <sequence resource="EMBL-CDS" id="BAB84913"/>
    </conflict>
    <text>Extended N-terminus.</text>
</comment>
<feature type="chain" id="PRO_0000211559" description="Ribosomal biogenesis protein LAS1L">
    <location>
        <begin position="1"/>
        <end position="734"/>
    </location>
</feature>
<feature type="region of interest" description="Disordered" evidence="2">
    <location>
        <begin position="204"/>
        <end position="255"/>
    </location>
</feature>
<feature type="region of interest" description="Disordered" evidence="2">
    <location>
        <begin position="547"/>
        <end position="619"/>
    </location>
</feature>
<feature type="region of interest" description="Interaction with NOL9" evidence="10">
    <location>
        <begin position="636"/>
        <end position="655"/>
    </location>
</feature>
<feature type="compositionally biased region" description="Basic and acidic residues" evidence="2">
    <location>
        <begin position="214"/>
        <end position="255"/>
    </location>
</feature>
<feature type="compositionally biased region" description="Polar residues" evidence="2">
    <location>
        <begin position="547"/>
        <end position="561"/>
    </location>
</feature>
<feature type="compositionally biased region" description="Basic and acidic residues" evidence="2">
    <location>
        <begin position="563"/>
        <end position="575"/>
    </location>
</feature>
<feature type="compositionally biased region" description="Acidic residues" evidence="2">
    <location>
        <begin position="578"/>
        <end position="605"/>
    </location>
</feature>
<feature type="modified residue" description="Phosphoserine" evidence="20">
    <location>
        <position position="441"/>
    </location>
</feature>
<feature type="modified residue" description="Phosphoserine" evidence="15 16 20">
    <location>
        <position position="523"/>
    </location>
</feature>
<feature type="modified residue" description="Phosphoserine" evidence="18 19 20">
    <location>
        <position position="560"/>
    </location>
</feature>
<feature type="modified residue" description="Phosphoserine" evidence="17 18 19 20 21">
    <location>
        <position position="617"/>
    </location>
</feature>
<feature type="cross-link" description="Glycyl lysine isopeptide (Lys-Gly) (interchain with G-Cter in SUMO2)" evidence="22">
    <location>
        <position position="215"/>
    </location>
</feature>
<feature type="cross-link" description="Glycyl lysine isopeptide (Lys-Gly) (interchain with G-Cter in SUMO2)" evidence="22">
    <location>
        <position position="226"/>
    </location>
</feature>
<feature type="splice variant" id="VSP_015178" description="In isoform 3." evidence="14">
    <location>
        <begin position="79"/>
        <end position="120"/>
    </location>
</feature>
<feature type="splice variant" id="VSP_015179" description="In isoform 4." evidence="13">
    <original>VLEKFRYLP</original>
    <variation>GGCAGCFSG</variation>
    <location>
        <begin position="283"/>
        <end position="291"/>
    </location>
</feature>
<feature type="splice variant" id="VSP_015180" description="In isoform 4." evidence="13">
    <location>
        <begin position="292"/>
        <end position="734"/>
    </location>
</feature>
<feature type="splice variant" id="VSP_015181" description="In isoform 2 and isoform 3." evidence="11">
    <original>DGQTEVQRGEGTDPKSHK</original>
    <variation>E</variation>
    <location>
        <begin position="348"/>
        <end position="365"/>
    </location>
</feature>
<feature type="sequence variant" id="VAR_036587" description="In a colorectal cancer sample; somatic mutation; dbSNP:rs1371889606." evidence="5">
    <original>R</original>
    <variation>C</variation>
    <location>
        <position position="170"/>
    </location>
</feature>
<feature type="sequence variant" id="VAR_077824" description="In WTS; uncertain significance; dbSNP:rs1173514495." evidence="9">
    <original>A</original>
    <variation>G</variation>
    <location>
        <position position="269"/>
    </location>
</feature>
<feature type="sequence variant" id="VAR_077825" description="In WTS; uncertain significance; dbSNP:rs1057518699." evidence="9">
    <original>R</original>
    <variation>W</variation>
    <location>
        <position position="415"/>
    </location>
</feature>
<gene>
    <name type="primary">LAS1L</name>
    <name type="ORF">MSTP060</name>
</gene>
<organism>
    <name type="scientific">Homo sapiens</name>
    <name type="common">Human</name>
    <dbReference type="NCBI Taxonomy" id="9606"/>
    <lineage>
        <taxon>Eukaryota</taxon>
        <taxon>Metazoa</taxon>
        <taxon>Chordata</taxon>
        <taxon>Craniata</taxon>
        <taxon>Vertebrata</taxon>
        <taxon>Euteleostomi</taxon>
        <taxon>Mammalia</taxon>
        <taxon>Eutheria</taxon>
        <taxon>Euarchontoglires</taxon>
        <taxon>Primates</taxon>
        <taxon>Haplorrhini</taxon>
        <taxon>Catarrhini</taxon>
        <taxon>Hominidae</taxon>
        <taxon>Homo</taxon>
    </lineage>
</organism>